<comment type="function">
    <text evidence="1 8 10 11 12 13 14 20 21 22 25 26 27 28">Plays a role in vesicle-mediated protein trafficking to lysosomal compartments including the endocytic membrane transport and autophagic pathways. Acts as a component of the HOPS endosomal tethering complex. This complex is proposed to be involved in the Rab5-to-Rab7 endosome conversion probably implicating MON1A/B, and via binding SNAREs and SNARE complexes to mediate tethering and docking events during SNARE-mediated membrane fusion. The HOPS complex is proposed to be recruited to Rab7 on the late endosomal membrane and to regulate late endocytic, phagocytic and autophagic traffic towards lysosomes (PubMed:23351085, PubMed:33851776). Involved in homotypic vesicle fusions between late endosomes and in heterotypic fusions between late endosomes and lysosomes implicated in degradation of endocytosed cargo (PubMed:23167963, PubMed:25445562, PubMed:25908847, PubMed:9159129). Required for fusion of autophagosomes with lysosomes (PubMed:25783203, PubMed:37821429). Links the HOPS complex to endosomal Rab7 via its association with RILP and to lysosomal membranes via its association with ARL8B, suggesting that these interactions may bring the compartments to close proximity for fusion (PubMed:21802320, PubMed:25445562, PubMed:25908847). Involved in the direct trans-Golgi network to late endosomes transport of lysosomal membrane proteins independently of HOPS (PubMed:23322049). Involved in sorting to the regulated secretory pathway presumably implicating the AP-3 adapter complex (By similarity). May play a role in HOPS-independent function in the regulated secretory pathway (PubMed:24210660).</text>
</comment>
<comment type="subunit">
    <text evidence="2 6 7 8 14 15 16 18 20 21 26 27 28 29">Component of the homotypic fusion and vacuole protein sorting (HOPS) complex; the core of which composed of the class C Vps proteins VPS11, VPS16, VPS18 and VPS33A, is associated with VPS39 and VPS41 (PubMed:23351085, PubMed:25445562, PubMed:25908847, PubMed:33851776). Interacts with RILP, MON1B (PubMed:20434987, PubMed:25445562). Interacts with ARL8B (GTP-bound form); involved in recruitment to lysosomes and probably hierarchial assembly of the HOPS complex at lysosomal membranes (PubMed:25908847). In vitro can self-assemble into a lattice (PubMed:24210660). Associates with adapter protein complex 3 (AP-3) and clathrin:AP-3 complexes (PubMed:21411634). Interacts with STX17; this interaction is increased in the absence of TMEM39A (PubMed:31806350, PubMed:33422265). Interacts with ARL8B and PLEKHM1; the interaction mediates the recruitment of the HOPS complex to lysosomes (PubMed:21802320, PubMed:25908847, PubMed:28325809). Interacts with RAB7, RAB2A and RAB2B (By similarity). Interacts with RAB39A (GTP-bound) and RAB39B (GTP-bound); interaction with RAB39A leads to a functional HOPS complex that mediates autophagosome-lysosome membrane tethering (PubMed:37821429).</text>
</comment>
<comment type="subunit">
    <text evidence="18">(Microbial infection) The interaction with STX17 is decreased in presence of SARS coronavirus-2/SARS-CoV-2 ORF3A protein.</text>
</comment>
<comment type="interaction">
    <interactant intactId="EBI-2130459">
        <id>P49754</id>
    </interactant>
    <interactant intactId="EBI-473814">
        <id>Q9Y4G2</id>
        <label>PLEKHM1</label>
    </interactant>
    <organismsDiffer>false</organismsDiffer>
    <experiments>9</experiments>
</comment>
<comment type="interaction">
    <interactant intactId="EBI-2130459">
        <id>P49754</id>
    </interactant>
    <interactant intactId="EBI-2856119">
        <id>Q96NA2</id>
        <label>RILP</label>
    </interactant>
    <organismsDiffer>false</organismsDiffer>
    <experiments>4</experiments>
</comment>
<comment type="interaction">
    <interactant intactId="EBI-2130459">
        <id>P49754</id>
    </interactant>
    <interactant intactId="EBI-2797775">
        <id>P56962</id>
        <label>STX17</label>
    </interactant>
    <organismsDiffer>false</organismsDiffer>
    <experiments>2</experiments>
</comment>
<comment type="interaction">
    <interactant intactId="EBI-2130459">
        <id>P49754</id>
    </interactant>
    <interactant intactId="EBI-749080">
        <id>Q9H9C1</id>
        <label>VIPAS39</label>
    </interactant>
    <organismsDiffer>false</organismsDiffer>
    <experiments>4</experiments>
</comment>
<comment type="interaction">
    <interactant intactId="EBI-2130459">
        <id>P49754</id>
    </interactant>
    <interactant intactId="EBI-373380">
        <id>Q9H270</id>
        <label>VPS11</label>
    </interactant>
    <organismsDiffer>false</organismsDiffer>
    <experiments>5</experiments>
</comment>
<comment type="interaction">
    <interactant intactId="EBI-2130459">
        <id>P49754</id>
    </interactant>
    <interactant intactId="EBI-1053363">
        <id>Q9P253</id>
        <label>VPS18</label>
    </interactant>
    <organismsDiffer>false</organismsDiffer>
    <experiments>6</experiments>
</comment>
<comment type="interaction">
    <interactant intactId="EBI-2130459">
        <id>P49754</id>
    </interactant>
    <interactant intactId="EBI-2130459">
        <id>P49754</id>
        <label>VPS41</label>
    </interactant>
    <organismsDiffer>false</organismsDiffer>
    <experiments>2</experiments>
</comment>
<comment type="interaction">
    <interactant intactId="EBI-2130459">
        <id>P49754</id>
    </interactant>
    <interactant intactId="EBI-25475894">
        <id>P0DTC3</id>
        <label>3a</label>
    </interactant>
    <organismsDiffer>true</organismsDiffer>
    <experiments>4</experiments>
</comment>
<comment type="subcellular location">
    <subcellularLocation>
        <location evidence="7 11 12">Endosome membrane</location>
        <topology evidence="10 12">Peripheral membrane protein</topology>
    </subcellularLocation>
    <subcellularLocation>
        <location evidence="11 18">Late endosome membrane</location>
        <topology evidence="10 12">Peripheral membrane protein</topology>
    </subcellularLocation>
    <subcellularLocation>
        <location evidence="7">Early endosome membrane</location>
        <topology evidence="10 12">Peripheral membrane protein</topology>
    </subcellularLocation>
    <subcellularLocation>
        <location evidence="8 11 18 20">Lysosome membrane</location>
        <topology evidence="10">Peripheral membrane protein</topology>
    </subcellularLocation>
    <subcellularLocation>
        <location evidence="11">Golgi apparatus</location>
        <location evidence="11">trans-Golgi network</location>
    </subcellularLocation>
    <subcellularLocation>
        <location evidence="7">Cytoplasmic vesicle</location>
        <location evidence="7">Clathrin-coated vesicle</location>
    </subcellularLocation>
    <subcellularLocation>
        <location evidence="10">Cytoplasm</location>
        <location evidence="10">Cytosol</location>
    </subcellularLocation>
</comment>
<comment type="subcellular location">
    <text evidence="18">(Microbial infection) Sequestrated at the late endosome by SARS coronavirus-2/SARS-CoV-2 ORF3A protein.</text>
</comment>
<comment type="alternative products">
    <event type="alternative splicing"/>
    <isoform>
        <id>P49754-1</id>
        <name>1</name>
        <sequence type="displayed"/>
    </isoform>
    <isoform>
        <id>P49754-2</id>
        <name>2</name>
        <sequence type="described" ref="VSP_006751 VSP_006752"/>
    </isoform>
    <isoform>
        <id>P49754-3</id>
        <name>3</name>
        <sequence type="described" ref="VSP_054169"/>
    </isoform>
</comment>
<comment type="tissue specificity">
    <text evidence="19">Expressed in cerebral cortex and cerebellum. Highly expressed in Purkinje cells.</text>
</comment>
<comment type="disease" evidence="17 19 20">
    <disease id="DI-06157">
        <name>Spinocerebellar ataxia, autosomal recessive, 29</name>
        <acronym>SCAR29</acronym>
        <description>A form of spinocerebellar ataxia, a clinically and genetically heterogeneous group of cerebellar disorders due to degeneration of the cerebellum with variable involvement of the brainstem and spinal cord. SCAR29 is a progressive disease characterized by delayed motor development in early infancy followed by difficulty walking due to an ataxic gait or inability to walk, hypotonia, and variably impaired intellectual development.</description>
        <dbReference type="MIM" id="619389"/>
    </disease>
    <text>The disease is caused by variants affecting the gene represented in this entry.</text>
</comment>
<comment type="miscellaneous">
    <text evidence="5 9">Protective against both alpha-synuclein and neurotoxic-mediated injury in invertebrate and cellular models of Parkinson's disease (PD); the function requires the AP-3 adapter complex and the HOPS complex.</text>
</comment>
<comment type="similarity">
    <text evidence="24">Belongs to the VPS41 family.</text>
</comment>
<proteinExistence type="evidence at protein level"/>
<organism>
    <name type="scientific">Homo sapiens</name>
    <name type="common">Human</name>
    <dbReference type="NCBI Taxonomy" id="9606"/>
    <lineage>
        <taxon>Eukaryota</taxon>
        <taxon>Metazoa</taxon>
        <taxon>Chordata</taxon>
        <taxon>Craniata</taxon>
        <taxon>Vertebrata</taxon>
        <taxon>Euteleostomi</taxon>
        <taxon>Mammalia</taxon>
        <taxon>Eutheria</taxon>
        <taxon>Euarchontoglires</taxon>
        <taxon>Primates</taxon>
        <taxon>Haplorrhini</taxon>
        <taxon>Catarrhini</taxon>
        <taxon>Hominidae</taxon>
        <taxon>Homo</taxon>
    </lineage>
</organism>
<sequence length="854" mass="98566">MAEAEEQETGSLEESTDESEEEESEEEPKLKYERLSNGVTEILQKDAASCMTVHDKFLALGTHYGKVYLLDVQGNITQKFDVSPVKINQISLDESGEHMGVCSEDGKVQVFGLYSGEEFHETFDCPIKIIAVHPHFVRSSCKQFVTGGKKLLLFERSWMNRWKSAVLHEGEGNIRSVKWRGHLIAWANNMGVKIFDIISKQRITNVPRDDISLRPDMYPCSLCWKDNVTLIIGWGTSVKVCSVKERHASEMRDLPSRYVEIVSQFETEFYISGLAPLCDQLVVLSYVKEISEKTEREYCARPRLDIIQPLSETCEEISSDALTVRGFQENECRDYHLEYSEGESLFYIVSPRDVVVAKERDQDDHIDWLLEKKKYEEALMAAEISQKNIKRHKILDIGLAYINHLVERGDYDIAARKCQKILGKNAALWEYEVYKFKEIGQLKAISPYLPRGDPVLKPLIYEMILHEFLESDYEGFATLIREWPGDLYNNSVIVQAVRDHLKKDSQNKTLLKTLAELYTYDKNYGNALEIYLTLRHKDVFQLIHKHNLFSSIKDKIVLLMDFDSEKAVDMLLDNEDKISIKKVVEELEDRPELQHVYLHKLFKRDHHKGQRYHEKQISLYAEYDRPNLLPFLRDSTHCPLEKALEICQQRNFVEETVYLLSRMGNSRSALKMIMEELHDVDKAIEFAKEQDDGELWEDLILYSIDKPPFITGLLNNIGTHVDPILLIHRIKEGMEIPNLRDSLVKILQDYNLQILLREGCKKILVADSLSLLKKMHRTQMKGVLVDEENICESCLSPILPSDAAKPFSVVVFHCRHMFHKECLPMPSMNSAAQFCNICSAKNRGPGSAILEMKK</sequence>
<gene>
    <name type="primary">VPS41</name>
</gene>
<evidence type="ECO:0000250" key="1">
    <source>
        <dbReference type="UniProtKB" id="D3ZVH6"/>
    </source>
</evidence>
<evidence type="ECO:0000250" key="2">
    <source>
        <dbReference type="UniProtKB" id="Q5KU39"/>
    </source>
</evidence>
<evidence type="ECO:0000255" key="3">
    <source>
        <dbReference type="PROSITE-ProRule" id="PRU00175"/>
    </source>
</evidence>
<evidence type="ECO:0000256" key="4">
    <source>
        <dbReference type="SAM" id="MobiDB-lite"/>
    </source>
</evidence>
<evidence type="ECO:0000269" key="5">
    <source>
    </source>
</evidence>
<evidence type="ECO:0000269" key="6">
    <source>
    </source>
</evidence>
<evidence type="ECO:0000269" key="7">
    <source>
    </source>
</evidence>
<evidence type="ECO:0000269" key="8">
    <source>
    </source>
</evidence>
<evidence type="ECO:0000269" key="9">
    <source>
    </source>
</evidence>
<evidence type="ECO:0000269" key="10">
    <source>
    </source>
</evidence>
<evidence type="ECO:0000269" key="11">
    <source>
    </source>
</evidence>
<evidence type="ECO:0000269" key="12">
    <source>
    </source>
</evidence>
<evidence type="ECO:0000269" key="13">
    <source>
    </source>
</evidence>
<evidence type="ECO:0000269" key="14">
    <source>
    </source>
</evidence>
<evidence type="ECO:0000269" key="15">
    <source>
    </source>
</evidence>
<evidence type="ECO:0000269" key="16">
    <source>
    </source>
</evidence>
<evidence type="ECO:0000269" key="17">
    <source>
    </source>
</evidence>
<evidence type="ECO:0000269" key="18">
    <source>
    </source>
</evidence>
<evidence type="ECO:0000269" key="19">
    <source>
    </source>
</evidence>
<evidence type="ECO:0000269" key="20">
    <source>
    </source>
</evidence>
<evidence type="ECO:0000269" key="21">
    <source>
    </source>
</evidence>
<evidence type="ECO:0000269" key="22">
    <source>
    </source>
</evidence>
<evidence type="ECO:0000303" key="23">
    <source>
    </source>
</evidence>
<evidence type="ECO:0000305" key="24"/>
<evidence type="ECO:0000305" key="25">
    <source>
    </source>
</evidence>
<evidence type="ECO:0000305" key="26">
    <source>
    </source>
</evidence>
<evidence type="ECO:0000305" key="27">
    <source>
    </source>
</evidence>
<evidence type="ECO:0000305" key="28">
    <source>
    </source>
</evidence>
<evidence type="ECO:0000305" key="29">
    <source>
    </source>
</evidence>
<dbReference type="EMBL" id="U87281">
    <property type="protein sequence ID" value="AAB47758.1"/>
    <property type="molecule type" value="mRNA"/>
</dbReference>
<dbReference type="EMBL" id="U87309">
    <property type="protein sequence ID" value="AAB47563.1"/>
    <property type="molecule type" value="mRNA"/>
</dbReference>
<dbReference type="EMBL" id="AC004850">
    <property type="status" value="NOT_ANNOTATED_CDS"/>
    <property type="molecule type" value="Genomic_DNA"/>
</dbReference>
<dbReference type="EMBL" id="AC005247">
    <property type="status" value="NOT_ANNOTATED_CDS"/>
    <property type="molecule type" value="Genomic_DNA"/>
</dbReference>
<dbReference type="EMBL" id="AC011292">
    <property type="status" value="NOT_ANNOTATED_CDS"/>
    <property type="molecule type" value="Genomic_DNA"/>
</dbReference>
<dbReference type="EMBL" id="BC044851">
    <property type="protein sequence ID" value="AAH44851.1"/>
    <property type="molecule type" value="mRNA"/>
</dbReference>
<dbReference type="EMBL" id="L40398">
    <property type="protein sequence ID" value="AAC42004.1"/>
    <property type="molecule type" value="mRNA"/>
</dbReference>
<dbReference type="CCDS" id="CCDS5457.1">
    <molecule id="P49754-1"/>
</dbReference>
<dbReference type="CCDS" id="CCDS5458.2">
    <molecule id="P49754-3"/>
</dbReference>
<dbReference type="RefSeq" id="NP_055211.2">
    <molecule id="P49754-1"/>
    <property type="nucleotide sequence ID" value="NM_014396.4"/>
</dbReference>
<dbReference type="RefSeq" id="NP_542198.2">
    <molecule id="P49754-3"/>
    <property type="nucleotide sequence ID" value="NM_080631.4"/>
</dbReference>
<dbReference type="BioGRID" id="117982">
    <property type="interactions" value="76"/>
</dbReference>
<dbReference type="ComplexPortal" id="CPX-6212">
    <property type="entry name" value="HOPS tethering complex"/>
</dbReference>
<dbReference type="CORUM" id="P49754"/>
<dbReference type="FunCoup" id="P49754">
    <property type="interactions" value="1584"/>
</dbReference>
<dbReference type="IntAct" id="P49754">
    <property type="interactions" value="46"/>
</dbReference>
<dbReference type="MINT" id="P49754"/>
<dbReference type="STRING" id="9606.ENSP00000309457"/>
<dbReference type="GlyGen" id="P49754">
    <property type="glycosylation" value="1 site, 1 O-linked glycan (1 site)"/>
</dbReference>
<dbReference type="iPTMnet" id="P49754"/>
<dbReference type="PhosphoSitePlus" id="P49754"/>
<dbReference type="BioMuta" id="VPS41"/>
<dbReference type="DMDM" id="218512109"/>
<dbReference type="jPOST" id="P49754"/>
<dbReference type="MassIVE" id="P49754"/>
<dbReference type="PaxDb" id="9606-ENSP00000309457"/>
<dbReference type="PeptideAtlas" id="P49754"/>
<dbReference type="ProteomicsDB" id="20017"/>
<dbReference type="ProteomicsDB" id="56068">
    <molecule id="P49754-1"/>
</dbReference>
<dbReference type="ProteomicsDB" id="56069">
    <molecule id="P49754-2"/>
</dbReference>
<dbReference type="Pumba" id="P49754"/>
<dbReference type="Antibodypedia" id="13056">
    <property type="antibodies" value="125 antibodies from 30 providers"/>
</dbReference>
<dbReference type="DNASU" id="27072"/>
<dbReference type="Ensembl" id="ENST00000310301.9">
    <molecule id="P49754-1"/>
    <property type="protein sequence ID" value="ENSP00000309457.4"/>
    <property type="gene ID" value="ENSG00000006715.16"/>
</dbReference>
<dbReference type="Ensembl" id="ENST00000395969.6">
    <molecule id="P49754-3"/>
    <property type="protein sequence ID" value="ENSP00000379297.2"/>
    <property type="gene ID" value="ENSG00000006715.16"/>
</dbReference>
<dbReference type="GeneID" id="27072"/>
<dbReference type="KEGG" id="hsa:27072"/>
<dbReference type="MANE-Select" id="ENST00000310301.9">
    <property type="protein sequence ID" value="ENSP00000309457.4"/>
    <property type="RefSeq nucleotide sequence ID" value="NM_014396.4"/>
    <property type="RefSeq protein sequence ID" value="NP_055211.2"/>
</dbReference>
<dbReference type="UCSC" id="uc003tgy.4">
    <molecule id="P49754-1"/>
    <property type="organism name" value="human"/>
</dbReference>
<dbReference type="AGR" id="HGNC:12713"/>
<dbReference type="CTD" id="27072"/>
<dbReference type="DisGeNET" id="27072"/>
<dbReference type="GeneCards" id="VPS41"/>
<dbReference type="HGNC" id="HGNC:12713">
    <property type="gene designation" value="VPS41"/>
</dbReference>
<dbReference type="HPA" id="ENSG00000006715">
    <property type="expression patterns" value="Low tissue specificity"/>
</dbReference>
<dbReference type="MalaCards" id="VPS41"/>
<dbReference type="MIM" id="605485">
    <property type="type" value="gene"/>
</dbReference>
<dbReference type="MIM" id="619389">
    <property type="type" value="phenotype"/>
</dbReference>
<dbReference type="neXtProt" id="NX_P49754"/>
<dbReference type="OpenTargets" id="ENSG00000006715"/>
<dbReference type="Orphanet" id="95434">
    <property type="disease" value="Autosomal recessive cerebellar ataxia-movement disorder syndrome"/>
</dbReference>
<dbReference type="PharmGKB" id="PA37328"/>
<dbReference type="VEuPathDB" id="HostDB:ENSG00000006715"/>
<dbReference type="eggNOG" id="KOG2066">
    <property type="taxonomic scope" value="Eukaryota"/>
</dbReference>
<dbReference type="GeneTree" id="ENSGT00390000000481"/>
<dbReference type="HOGENOM" id="CLU_001285_2_2_1"/>
<dbReference type="InParanoid" id="P49754"/>
<dbReference type="OMA" id="PQLVWQD"/>
<dbReference type="OrthoDB" id="244107at2759"/>
<dbReference type="PAN-GO" id="P49754">
    <property type="GO annotations" value="6 GO annotations based on evolutionary models"/>
</dbReference>
<dbReference type="PhylomeDB" id="P49754"/>
<dbReference type="TreeFam" id="TF300451"/>
<dbReference type="PathwayCommons" id="P49754"/>
<dbReference type="Reactome" id="R-HSA-9754560">
    <property type="pathway name" value="SARS-CoV-2 modulates autophagy"/>
</dbReference>
<dbReference type="SignaLink" id="P49754"/>
<dbReference type="SIGNOR" id="P49754"/>
<dbReference type="BioGRID-ORCS" id="27072">
    <property type="hits" value="413 hits in 1204 CRISPR screens"/>
</dbReference>
<dbReference type="ChiTaRS" id="VPS41">
    <property type="organism name" value="human"/>
</dbReference>
<dbReference type="GenomeRNAi" id="27072"/>
<dbReference type="Pharos" id="P49754">
    <property type="development level" value="Tbio"/>
</dbReference>
<dbReference type="PRO" id="PR:P49754"/>
<dbReference type="Proteomes" id="UP000005640">
    <property type="component" value="Chromosome 7"/>
</dbReference>
<dbReference type="RNAct" id="P49754">
    <property type="molecule type" value="protein"/>
</dbReference>
<dbReference type="Bgee" id="ENSG00000006715">
    <property type="expression patterns" value="Expressed in calcaneal tendon and 185 other cell types or tissues"/>
</dbReference>
<dbReference type="ExpressionAtlas" id="P49754">
    <property type="expression patterns" value="baseline and differential"/>
</dbReference>
<dbReference type="GO" id="GO:0030136">
    <property type="term" value="C:clathrin-coated vesicle"/>
    <property type="evidence" value="ECO:0000314"/>
    <property type="project" value="UniProtKB"/>
</dbReference>
<dbReference type="GO" id="GO:0005829">
    <property type="term" value="C:cytosol"/>
    <property type="evidence" value="ECO:0000314"/>
    <property type="project" value="UniProtKB"/>
</dbReference>
<dbReference type="GO" id="GO:0031901">
    <property type="term" value="C:early endosome membrane"/>
    <property type="evidence" value="ECO:0007669"/>
    <property type="project" value="UniProtKB-SubCell"/>
</dbReference>
<dbReference type="GO" id="GO:0010008">
    <property type="term" value="C:endosome membrane"/>
    <property type="evidence" value="ECO:0000314"/>
    <property type="project" value="UniProtKB"/>
</dbReference>
<dbReference type="GO" id="GO:0005794">
    <property type="term" value="C:Golgi apparatus"/>
    <property type="evidence" value="ECO:0007669"/>
    <property type="project" value="UniProtKB-SubCell"/>
</dbReference>
<dbReference type="GO" id="GO:0005798">
    <property type="term" value="C:Golgi-associated vesicle"/>
    <property type="evidence" value="ECO:0000315"/>
    <property type="project" value="UniProtKB"/>
</dbReference>
<dbReference type="GO" id="GO:0030897">
    <property type="term" value="C:HOPS complex"/>
    <property type="evidence" value="ECO:0000314"/>
    <property type="project" value="UniProtKB"/>
</dbReference>
<dbReference type="GO" id="GO:0005770">
    <property type="term" value="C:late endosome"/>
    <property type="evidence" value="ECO:0000314"/>
    <property type="project" value="UniProtKB"/>
</dbReference>
<dbReference type="GO" id="GO:0031902">
    <property type="term" value="C:late endosome membrane"/>
    <property type="evidence" value="ECO:0000314"/>
    <property type="project" value="UniProtKB"/>
</dbReference>
<dbReference type="GO" id="GO:1902501">
    <property type="term" value="C:lysosomal HOPS complex"/>
    <property type="evidence" value="ECO:0000314"/>
    <property type="project" value="UniProtKB"/>
</dbReference>
<dbReference type="GO" id="GO:0005765">
    <property type="term" value="C:lysosomal membrane"/>
    <property type="evidence" value="ECO:0000314"/>
    <property type="project" value="UniProtKB"/>
</dbReference>
<dbReference type="GO" id="GO:0005764">
    <property type="term" value="C:lysosome"/>
    <property type="evidence" value="ECO:0000314"/>
    <property type="project" value="UniProtKB"/>
</dbReference>
<dbReference type="GO" id="GO:0016020">
    <property type="term" value="C:membrane"/>
    <property type="evidence" value="ECO:0000314"/>
    <property type="project" value="UniProtKB"/>
</dbReference>
<dbReference type="GO" id="GO:0015630">
    <property type="term" value="C:microtubule cytoskeleton"/>
    <property type="evidence" value="ECO:0007669"/>
    <property type="project" value="Ensembl"/>
</dbReference>
<dbReference type="GO" id="GO:0042802">
    <property type="term" value="F:identical protein binding"/>
    <property type="evidence" value="ECO:0000353"/>
    <property type="project" value="IntAct"/>
</dbReference>
<dbReference type="GO" id="GO:0008017">
    <property type="term" value="F:microtubule binding"/>
    <property type="evidence" value="ECO:0007669"/>
    <property type="project" value="Ensembl"/>
</dbReference>
<dbReference type="GO" id="GO:0008270">
    <property type="term" value="F:zinc ion binding"/>
    <property type="evidence" value="ECO:0007669"/>
    <property type="project" value="UniProtKB-KW"/>
</dbReference>
<dbReference type="GO" id="GO:0009267">
    <property type="term" value="P:cellular response to starvation"/>
    <property type="evidence" value="ECO:0000318"/>
    <property type="project" value="GO_Central"/>
</dbReference>
<dbReference type="GO" id="GO:0034058">
    <property type="term" value="P:endosomal vesicle fusion"/>
    <property type="evidence" value="ECO:0000315"/>
    <property type="project" value="UniProtKB"/>
</dbReference>
<dbReference type="GO" id="GO:0008333">
    <property type="term" value="P:endosome to lysosome transport"/>
    <property type="evidence" value="ECO:0000315"/>
    <property type="project" value="UniProtKB"/>
</dbReference>
<dbReference type="GO" id="GO:0048193">
    <property type="term" value="P:Golgi vesicle transport"/>
    <property type="evidence" value="ECO:0000315"/>
    <property type="project" value="UniProtKB"/>
</dbReference>
<dbReference type="GO" id="GO:1902774">
    <property type="term" value="P:late endosome to lysosome transport"/>
    <property type="evidence" value="ECO:0000315"/>
    <property type="project" value="UniProtKB"/>
</dbReference>
<dbReference type="GO" id="GO:0016236">
    <property type="term" value="P:macroautophagy"/>
    <property type="evidence" value="ECO:0000318"/>
    <property type="project" value="GO_Central"/>
</dbReference>
<dbReference type="GO" id="GO:0006623">
    <property type="term" value="P:protein targeting to vacuole"/>
    <property type="evidence" value="ECO:0000318"/>
    <property type="project" value="GO_Central"/>
</dbReference>
<dbReference type="GO" id="GO:0035542">
    <property type="term" value="P:regulation of SNARE complex assembly"/>
    <property type="evidence" value="ECO:0000303"/>
    <property type="project" value="ComplexPortal"/>
</dbReference>
<dbReference type="GO" id="GO:0016192">
    <property type="term" value="P:vesicle-mediated transport"/>
    <property type="evidence" value="ECO:0000315"/>
    <property type="project" value="UniProtKB"/>
</dbReference>
<dbReference type="CDD" id="cd16690">
    <property type="entry name" value="RING-H2_Vps41"/>
    <property type="match status" value="1"/>
</dbReference>
<dbReference type="FunFam" id="1.25.40.10:FF:000247">
    <property type="entry name" value="Vacuolar protein sorting-associated protein 41 homolog"/>
    <property type="match status" value="1"/>
</dbReference>
<dbReference type="FunFam" id="2.130.10.10:FF:000107">
    <property type="entry name" value="Vacuolar protein sorting-associated protein 41 homolog"/>
    <property type="match status" value="1"/>
</dbReference>
<dbReference type="Gene3D" id="1.25.40.10">
    <property type="entry name" value="Tetratricopeptide repeat domain"/>
    <property type="match status" value="1"/>
</dbReference>
<dbReference type="Gene3D" id="2.130.10.10">
    <property type="entry name" value="YVTN repeat-like/Quinoprotein amine dehydrogenase"/>
    <property type="match status" value="1"/>
</dbReference>
<dbReference type="InterPro" id="IPR000547">
    <property type="entry name" value="Clathrin_H-chain/VPS_repeat"/>
</dbReference>
<dbReference type="InterPro" id="IPR011990">
    <property type="entry name" value="TPR-like_helical_dom_sf"/>
</dbReference>
<dbReference type="InterPro" id="IPR016902">
    <property type="entry name" value="VPS41"/>
</dbReference>
<dbReference type="InterPro" id="IPR045111">
    <property type="entry name" value="Vps41/Vps8"/>
</dbReference>
<dbReference type="InterPro" id="IPR015943">
    <property type="entry name" value="WD40/YVTN_repeat-like_dom_sf"/>
</dbReference>
<dbReference type="InterPro" id="IPR036322">
    <property type="entry name" value="WD40_repeat_dom_sf"/>
</dbReference>
<dbReference type="InterPro" id="IPR001841">
    <property type="entry name" value="Znf_RING"/>
</dbReference>
<dbReference type="PANTHER" id="PTHR12616">
    <property type="entry name" value="VACUOLAR PROTEIN SORTING VPS41"/>
    <property type="match status" value="1"/>
</dbReference>
<dbReference type="PANTHER" id="PTHR12616:SF1">
    <property type="entry name" value="VACUOLAR PROTEIN SORTING-ASSOCIATED PROTEIN 41 HOMOLOG"/>
    <property type="match status" value="1"/>
</dbReference>
<dbReference type="Pfam" id="PF23411">
    <property type="entry name" value="Beta-prop_Vps41"/>
    <property type="match status" value="1"/>
</dbReference>
<dbReference type="Pfam" id="PF23556">
    <property type="entry name" value="TPR_Vps41"/>
    <property type="match status" value="1"/>
</dbReference>
<dbReference type="Pfam" id="PF23555">
    <property type="entry name" value="zf-RING_Vps41"/>
    <property type="match status" value="1"/>
</dbReference>
<dbReference type="PIRSF" id="PIRSF028921">
    <property type="entry name" value="VPS41"/>
    <property type="match status" value="1"/>
</dbReference>
<dbReference type="SMART" id="SM00299">
    <property type="entry name" value="CLH"/>
    <property type="match status" value="1"/>
</dbReference>
<dbReference type="SUPFAM" id="SSF57850">
    <property type="entry name" value="RING/U-box"/>
    <property type="match status" value="1"/>
</dbReference>
<dbReference type="SUPFAM" id="SSF50978">
    <property type="entry name" value="WD40 repeat-like"/>
    <property type="match status" value="1"/>
</dbReference>
<dbReference type="PROSITE" id="PS50236">
    <property type="entry name" value="CHCR"/>
    <property type="match status" value="1"/>
</dbReference>
<dbReference type="PROSITE" id="PS50089">
    <property type="entry name" value="ZF_RING_2"/>
    <property type="match status" value="1"/>
</dbReference>
<keyword id="KW-0025">Alternative splicing</keyword>
<keyword id="KW-0072">Autophagy</keyword>
<keyword id="KW-0963">Cytoplasm</keyword>
<keyword id="KW-0968">Cytoplasmic vesicle</keyword>
<keyword id="KW-0225">Disease variant</keyword>
<keyword id="KW-0967">Endosome</keyword>
<keyword id="KW-0333">Golgi apparatus</keyword>
<keyword id="KW-0458">Lysosome</keyword>
<keyword id="KW-0472">Membrane</keyword>
<keyword id="KW-0479">Metal-binding</keyword>
<keyword id="KW-0523">Neurodegeneration</keyword>
<keyword id="KW-0653">Protein transport</keyword>
<keyword id="KW-1267">Proteomics identification</keyword>
<keyword id="KW-1185">Reference proteome</keyword>
<keyword id="KW-0950">Spinocerebellar ataxia</keyword>
<keyword id="KW-0813">Transport</keyword>
<keyword id="KW-0862">Zinc</keyword>
<keyword id="KW-0863">Zinc-finger</keyword>
<protein>
    <recommendedName>
        <fullName>Vacuolar protein sorting-associated protein 41 homolog</fullName>
    </recommendedName>
    <alternativeName>
        <fullName>S53</fullName>
    </alternativeName>
</protein>
<name>VPS41_HUMAN</name>
<feature type="chain" id="PRO_0000212823" description="Vacuolar protein sorting-associated protein 41 homolog">
    <location>
        <begin position="1"/>
        <end position="854"/>
    </location>
</feature>
<feature type="repeat" description="CHCR">
    <location>
        <begin position="568"/>
        <end position="712"/>
    </location>
</feature>
<feature type="zinc finger region" description="RING-type; atypical" evidence="3">
    <location>
        <begin position="791"/>
        <end position="839"/>
    </location>
</feature>
<feature type="region of interest" description="Interaction with ARL8B" evidence="14">
    <location>
        <begin position="1"/>
        <end position="540"/>
    </location>
</feature>
<feature type="region of interest" description="Disordered" evidence="4">
    <location>
        <begin position="1"/>
        <end position="33"/>
    </location>
</feature>
<feature type="compositionally biased region" description="Acidic residues" evidence="4">
    <location>
        <begin position="14"/>
        <end position="26"/>
    </location>
</feature>
<feature type="splice variant" id="VSP_054169" description="In isoform 3." evidence="24">
    <location>
        <begin position="83"/>
        <end position="107"/>
    </location>
</feature>
<feature type="splice variant" id="VSP_006751" description="In isoform 2." evidence="23">
    <original>D</original>
    <variation>E</variation>
    <location>
        <position position="802"/>
    </location>
</feature>
<feature type="splice variant" id="VSP_006752" description="In isoform 2." evidence="23">
    <location>
        <begin position="803"/>
        <end position="854"/>
    </location>
</feature>
<feature type="sequence variant" id="VAR_085704" description="In SCAR29; uncertain significance; no effect on protein expression." evidence="19">
    <original>E</original>
    <variation>G</variation>
    <location>
        <position position="13"/>
    </location>
</feature>
<feature type="sequence variant" id="VAR_047914" description="Disrupts interaction with ARL8B; impairs lysosomal localization and degradation of endocytosed cargo; dbSNP:rs35693565." evidence="14">
    <original>T</original>
    <variation>P</variation>
    <location>
        <position position="146"/>
    </location>
</feature>
<feature type="sequence variant" id="VAR_085705" description="In SCAR29; decreased protein abundance; cannot form a functional HOPS complex; causes a kinetic defect in the endosome-lysosome fusion process; dbSNP:rs544223875." evidence="19 20">
    <original>S</original>
    <variation>P</variation>
    <location>
        <position position="285"/>
    </location>
</feature>
<feature type="sequence variant" id="VAR_085706" description="In SCAR29; uncertain significance; decreased protein abundance; dbSNP:rs1244049089." evidence="19">
    <original>R</original>
    <variation>P</variation>
    <location>
        <position position="633"/>
    </location>
</feature>
<feature type="sequence variant" id="VAR_047915" description="In dbSNP:rs11762417.">
    <original>C</original>
    <variation>R</variation>
    <location>
        <position position="647"/>
    </location>
</feature>
<feature type="sequence variant" id="VAR_085707" description="In SCAR29; loss of expression; cannot form a functional HOPS complex." evidence="20">
    <location>
        <begin position="662"/>
        <end position="854"/>
    </location>
</feature>
<feature type="sequence variant" id="VAR_085708" description="In SCAR29; decreased protein abundance; dbSNP:rs1246628003." evidence="19">
    <original>C</original>
    <variation>F</variation>
    <location>
        <position position="791"/>
    </location>
</feature>
<feature type="sequence variant" id="VAR_047916" description="In dbSNP:rs1059508.">
    <original>R</original>
    <variation>H</variation>
    <location>
        <position position="843"/>
    </location>
</feature>
<feature type="sequence conflict" description="In Ref. 1; AAB47563." evidence="24" ref="1">
    <original>E</original>
    <variation>V</variation>
    <location>
        <position position="5"/>
    </location>
</feature>
<feature type="sequence conflict" description="In Ref. 4; AAC42004." evidence="24" ref="4">
    <original>KQIS</original>
    <variation>WHEG</variation>
    <location>
        <begin position="615"/>
        <end position="618"/>
    </location>
</feature>
<feature type="sequence conflict" description="In Ref. 4; AAC42004." evidence="24" ref="4">
    <original>IPNLRDSLV</original>
    <variation>DPQFERFLG</variation>
    <location>
        <begin position="736"/>
        <end position="744"/>
    </location>
</feature>
<accession>P49754</accession>
<accession>E9PF36</accession>
<accession>Q86TP8</accession>
<accession>Q99851</accession>
<accession>Q99852</accession>
<reference key="1">
    <citation type="journal article" date="1997" name="Proc. Natl. Acad. Sci. U.S.A.">
        <title>Characterization of VPS41, a gene required for vacuolar trafficking and high-affinity iron transport in yeast.</title>
        <authorList>
            <person name="Radisky D.C."/>
            <person name="Snyder W.B."/>
            <person name="Emr S.D."/>
            <person name="Kaplan J."/>
        </authorList>
    </citation>
    <scope>NUCLEOTIDE SEQUENCE [MRNA] (ISOFORMS 1 AND 2)</scope>
    <scope>FUNCTION</scope>
    <source>
        <tissue>Heart</tissue>
    </source>
</reference>
<reference key="2">
    <citation type="journal article" date="2003" name="Nature">
        <title>The DNA sequence of human chromosome 7.</title>
        <authorList>
            <person name="Hillier L.W."/>
            <person name="Fulton R.S."/>
            <person name="Fulton L.A."/>
            <person name="Graves T.A."/>
            <person name="Pepin K.H."/>
            <person name="Wagner-McPherson C."/>
            <person name="Layman D."/>
            <person name="Maas J."/>
            <person name="Jaeger S."/>
            <person name="Walker R."/>
            <person name="Wylie K."/>
            <person name="Sekhon M."/>
            <person name="Becker M.C."/>
            <person name="O'Laughlin M.D."/>
            <person name="Schaller M.E."/>
            <person name="Fewell G.A."/>
            <person name="Delehaunty K.D."/>
            <person name="Miner T.L."/>
            <person name="Nash W.E."/>
            <person name="Cordes M."/>
            <person name="Du H."/>
            <person name="Sun H."/>
            <person name="Edwards J."/>
            <person name="Bradshaw-Cordum H."/>
            <person name="Ali J."/>
            <person name="Andrews S."/>
            <person name="Isak A."/>
            <person name="Vanbrunt A."/>
            <person name="Nguyen C."/>
            <person name="Du F."/>
            <person name="Lamar B."/>
            <person name="Courtney L."/>
            <person name="Kalicki J."/>
            <person name="Ozersky P."/>
            <person name="Bielicki L."/>
            <person name="Scott K."/>
            <person name="Holmes A."/>
            <person name="Harkins R."/>
            <person name="Harris A."/>
            <person name="Strong C.M."/>
            <person name="Hou S."/>
            <person name="Tomlinson C."/>
            <person name="Dauphin-Kohlberg S."/>
            <person name="Kozlowicz-Reilly A."/>
            <person name="Leonard S."/>
            <person name="Rohlfing T."/>
            <person name="Rock S.M."/>
            <person name="Tin-Wollam A.-M."/>
            <person name="Abbott A."/>
            <person name="Minx P."/>
            <person name="Maupin R."/>
            <person name="Strowmatt C."/>
            <person name="Latreille P."/>
            <person name="Miller N."/>
            <person name="Johnson D."/>
            <person name="Murray J."/>
            <person name="Woessner J.P."/>
            <person name="Wendl M.C."/>
            <person name="Yang S.-P."/>
            <person name="Schultz B.R."/>
            <person name="Wallis J.W."/>
            <person name="Spieth J."/>
            <person name="Bieri T.A."/>
            <person name="Nelson J.O."/>
            <person name="Berkowicz N."/>
            <person name="Wohldmann P.E."/>
            <person name="Cook L.L."/>
            <person name="Hickenbotham M.T."/>
            <person name="Eldred J."/>
            <person name="Williams D."/>
            <person name="Bedell J.A."/>
            <person name="Mardis E.R."/>
            <person name="Clifton S.W."/>
            <person name="Chissoe S.L."/>
            <person name="Marra M.A."/>
            <person name="Raymond C."/>
            <person name="Haugen E."/>
            <person name="Gillett W."/>
            <person name="Zhou Y."/>
            <person name="James R."/>
            <person name="Phelps K."/>
            <person name="Iadanoto S."/>
            <person name="Bubb K."/>
            <person name="Simms E."/>
            <person name="Levy R."/>
            <person name="Clendenning J."/>
            <person name="Kaul R."/>
            <person name="Kent W.J."/>
            <person name="Furey T.S."/>
            <person name="Baertsch R.A."/>
            <person name="Brent M.R."/>
            <person name="Keibler E."/>
            <person name="Flicek P."/>
            <person name="Bork P."/>
            <person name="Suyama M."/>
            <person name="Bailey J.A."/>
            <person name="Portnoy M.E."/>
            <person name="Torrents D."/>
            <person name="Chinwalla A.T."/>
            <person name="Gish W.R."/>
            <person name="Eddy S.R."/>
            <person name="McPherson J.D."/>
            <person name="Olson M.V."/>
            <person name="Eichler E.E."/>
            <person name="Green E.D."/>
            <person name="Waterston R.H."/>
            <person name="Wilson R.K."/>
        </authorList>
    </citation>
    <scope>NUCLEOTIDE SEQUENCE [LARGE SCALE GENOMIC DNA]</scope>
</reference>
<reference key="3">
    <citation type="journal article" date="2004" name="Genome Res.">
        <title>The status, quality, and expansion of the NIH full-length cDNA project: the Mammalian Gene Collection (MGC).</title>
        <authorList>
            <consortium name="The MGC Project Team"/>
        </authorList>
    </citation>
    <scope>NUCLEOTIDE SEQUENCE [LARGE SCALE MRNA] (ISOFORM 1)</scope>
    <source>
        <tissue>Testis</tissue>
    </source>
</reference>
<reference key="4">
    <citation type="journal article" date="1995" name="Nature">
        <title>Cloning of a gene bearing missense mutations in early-onset familial Alzheimer's disease.</title>
        <authorList>
            <person name="Sherrington R."/>
            <person name="Rogaev E.I."/>
            <person name="Liang Y."/>
            <person name="Rogaeva E.A."/>
            <person name="Levesque G."/>
            <person name="Ikeda M."/>
            <person name="Chi H."/>
            <person name="Lin C."/>
            <person name="Li G."/>
            <person name="Holman K."/>
            <person name="Tsuda T."/>
            <person name="Mar L."/>
            <person name="Foncin J.-F."/>
            <person name="Bruni A.C."/>
            <person name="Montesi M.P."/>
            <person name="Sorbi S."/>
            <person name="Rainero I."/>
            <person name="Pinessi L."/>
            <person name="Nee L."/>
            <person name="Chumakov I."/>
            <person name="Pollen D."/>
            <person name="Brookes A."/>
            <person name="Sanseau P."/>
            <person name="Polinsky R.J."/>
            <person name="Wasco W."/>
            <person name="da Silva H.A.R."/>
            <person name="Haines J.L."/>
            <person name="Pericak-Vance M.A."/>
            <person name="Tanzi R.E."/>
            <person name="Roses A.D."/>
            <person name="Fraser P.E."/>
            <person name="Rommens J.M."/>
            <person name="St George-Hyslop P.H."/>
        </authorList>
    </citation>
    <scope>NUCLEOTIDE SEQUENCE [MRNA] OF 615-744</scope>
    <source>
        <tissue>Brain</tissue>
    </source>
</reference>
<reference key="5">
    <citation type="journal article" date="2010" name="Cell">
        <title>Identification of the switch in early-to-late endosome transition.</title>
        <authorList>
            <person name="Poteryaev D."/>
            <person name="Datta S."/>
            <person name="Ackema K."/>
            <person name="Zerial M."/>
            <person name="Spang A."/>
        </authorList>
    </citation>
    <scope>INTERACTION WITH MON1B</scope>
</reference>
<reference key="6">
    <citation type="journal article" date="2010" name="Neurobiol. Dis.">
        <title>VPS41, a protein involved in lysosomal trafficking, is protective in Caenorhabditis elegans and mammalian cellular models of Parkinson's disease.</title>
        <authorList>
            <person name="Ruan Q."/>
            <person name="Harrington A.J."/>
            <person name="Caldwell K.A."/>
            <person name="Caldwell G.A."/>
            <person name="Standaert D.G."/>
        </authorList>
    </citation>
    <scope>MISCELLANEOUS</scope>
</reference>
<reference key="7">
    <citation type="journal article" date="2011" name="Immunity">
        <title>Lysosomal trafficking, antigen presentation, and microbial killing are controlled by the Arf-like GTPase Arl8b.</title>
        <authorList>
            <person name="Garg S."/>
            <person name="Sharma M."/>
            <person name="Ung C."/>
            <person name="Tuli A."/>
            <person name="Barral D.C."/>
            <person name="Hava D.L."/>
            <person name="Veerapen N."/>
            <person name="Besra G.S."/>
            <person name="Hacohen N."/>
            <person name="Brenner M.B."/>
        </authorList>
    </citation>
    <scope>FUNCTION</scope>
    <scope>INTERACTION WITH ARL8B</scope>
    <scope>SUBCELLULAR LOCATION</scope>
</reference>
<reference key="8">
    <citation type="journal article" date="2011" name="Mol. Biol. Cell">
        <title>Clathrin-dependent mechanisms modulate the subcellular distribution of class C Vps/HOPS tether subunits in polarized and nonpolarized cells.</title>
        <authorList>
            <person name="Zlatic S.A."/>
            <person name="Tornieri K."/>
            <person name="L'Hernault S.W."/>
            <person name="Faundez V."/>
        </authorList>
    </citation>
    <scope>SUBUNIT</scope>
    <scope>SUBCELLULAR LOCATION</scope>
</reference>
<reference key="9">
    <citation type="journal article" date="2012" name="J. Neurosci.">
        <title>Functional analysis of VPS41-mediated neuroprotection in Caenorhabditis elegans and mammalian models of Parkinson's disease.</title>
        <authorList>
            <person name="Harrington A.J."/>
            <person name="Yacoubian T.A."/>
            <person name="Slone S.R."/>
            <person name="Caldwell K.A."/>
            <person name="Caldwell G.A."/>
        </authorList>
    </citation>
    <scope>MISCELLANEOUS</scope>
</reference>
<reference key="10">
    <citation type="journal article" date="2013" name="Dev. Cell">
        <title>Self-assembly of VPS41 promotes sorting required for biogenesis of the regulated secretory pathway.</title>
        <authorList>
            <person name="Asensio C.S."/>
            <person name="Sirkis D.W."/>
            <person name="Maas J.W. Jr."/>
            <person name="Egami K."/>
            <person name="To T.L."/>
            <person name="Brodsky F.M."/>
            <person name="Shu X."/>
            <person name="Cheng Y."/>
            <person name="Edwards R.H."/>
        </authorList>
    </citation>
    <scope>FUNCTION</scope>
    <scope>SUBUNIT</scope>
</reference>
<reference key="11">
    <citation type="journal article" date="2013" name="FEBS J.">
        <title>Tethering complexes in the endocytic pathway: CORVET and HOPS.</title>
        <authorList>
            <person name="Solinger J.A."/>
            <person name="Spang A."/>
        </authorList>
    </citation>
    <scope>REVIEW ON THE HOPS AND CORVET COMPLEXES</scope>
</reference>
<reference key="12">
    <citation type="journal article" date="2013" name="Nat. Commun.">
        <title>hVps41 and VAMP7 function in direct TGN to late endosome transport of lysosomal membrane proteins.</title>
        <authorList>
            <person name="Pols M.S."/>
            <person name="van Meel E."/>
            <person name="Oorschot V."/>
            <person name="ten Brink C."/>
            <person name="Fukuda M."/>
            <person name="Swetha M.G."/>
            <person name="Mayor S."/>
            <person name="Klumperman J."/>
        </authorList>
    </citation>
    <scope>FUNCTION</scope>
    <scope>SUBCELLULAR LOCATION</scope>
</reference>
<reference key="13">
    <citation type="journal article" date="2013" name="Traffic">
        <title>The HOPS proteins hVps41 and hVps39 are required for homotypic and heterotypic late endosome fusion.</title>
        <authorList>
            <person name="Pols M.S."/>
            <person name="ten Brink C."/>
            <person name="Gosavi P."/>
            <person name="Oorschot V."/>
            <person name="Klumperman J."/>
        </authorList>
    </citation>
    <scope>FUNCTION</scope>
    <scope>SUBCELLULAR LOCATION</scope>
</reference>
<reference key="14">
    <citation type="journal article" date="2014" name="Sci. Rep.">
        <title>RILP interacts with HOPS complex via VPS41 subunit to regulate endocytic trafficking.</title>
        <authorList>
            <person name="Lin X."/>
            <person name="Yang T."/>
            <person name="Wang S."/>
            <person name="Wang Z."/>
            <person name="Yun Y."/>
            <person name="Sun L."/>
            <person name="Zhou Y."/>
            <person name="Xu X."/>
            <person name="Akazawa C."/>
            <person name="Hong W."/>
            <person name="Wang T."/>
        </authorList>
    </citation>
    <scope>FUNCTION</scope>
    <scope>SUBCELLULAR LOCATION</scope>
    <scope>INTERACTION WITH RILP</scope>
    <scope>SUBUNIT</scope>
</reference>
<reference key="15">
    <citation type="journal article" date="2015" name="J. Cell Sci.">
        <title>The small GTPase Arl8b regulates assembly of the mammalian HOPS complex on lysosomes.</title>
        <authorList>
            <person name="Khatter D."/>
            <person name="Raina V.B."/>
            <person name="Dwivedi D."/>
            <person name="Sindhwani A."/>
            <person name="Bahl S."/>
            <person name="Sharma M."/>
        </authorList>
    </citation>
    <scope>FUNCTION</scope>
    <scope>SUBUNIT</scope>
    <scope>INTERACTION WITH ARL8B</scope>
    <scope>VARIANT PRO-146</scope>
    <scope>CHARACTERIZATION OF VARIANT PRO-146</scope>
</reference>
<reference key="16">
    <citation type="journal article" date="2015" name="Traffic">
        <title>Recruitment of VPS33A to HOPS by VPS16 Is Required for Lysosome Fusion with Endosomes and Autophagosomes.</title>
        <authorList>
            <person name="Wartosch L."/>
            <person name="Guenesdogan U."/>
            <person name="Graham S.C."/>
            <person name="Luzio J.P."/>
        </authorList>
    </citation>
    <scope>FUNCTION</scope>
    <scope>FUNCTION OF THE HOPS COMPLEX</scope>
</reference>
<reference key="17">
    <citation type="journal article" date="2017" name="J. Cell Biol.">
        <title>The Rab7 effector PLEKHM1 binds Arl8b to promote cargo traffic to lysosomes.</title>
        <authorList>
            <person name="Marwaha R."/>
            <person name="Arya S.B."/>
            <person name="Jagga D."/>
            <person name="Kaur H."/>
            <person name="Tuli A."/>
            <person name="Sharma M."/>
        </authorList>
    </citation>
    <scope>INTERACTION WITH PLEKHM1</scope>
</reference>
<reference key="18">
    <citation type="journal article" date="2019" name="Mol. Cell">
        <title>The ER-Localized Transmembrane Protein TMEM39A/SUSR2 Regulates Autophagy by Controlling the Trafficking of the PtdIns(4)P Phosphatase SAC1.</title>
        <authorList>
            <person name="Miao G."/>
            <person name="Zhang Y."/>
            <person name="Chen D."/>
            <person name="Zhang H."/>
        </authorList>
    </citation>
    <scope>INTERACTION WITH STX17</scope>
</reference>
<reference key="19">
    <citation type="journal article" date="2020" name="Ann. Neurol.">
        <title>Loss-of-Function Variants in HOPS Complex Genes VPS16 and VPS41 Cause Early Onset Dystonia Associated with Lysosomal Abnormalities.</title>
        <authorList>
            <consortium name="Genomics England Research Consortium"/>
            <person name="Steel D."/>
            <person name="Zech M."/>
            <person name="Zhao C."/>
            <person name="Barwick K.E.S."/>
            <person name="Burke D."/>
            <person name="Demailly D."/>
            <person name="Kumar K.R."/>
            <person name="Zorzi G."/>
            <person name="Nardocci N."/>
            <person name="Kaiyrzhanov R."/>
            <person name="Wagner M."/>
            <person name="Iuso A."/>
            <person name="Berutti R."/>
            <person name="Skorvanek M."/>
            <person name="Necpal J."/>
            <person name="Davis R."/>
            <person name="Wiethoff S."/>
            <person name="Mankad K."/>
            <person name="Sudhakar S."/>
            <person name="Ferrini A."/>
            <person name="Sharma S."/>
            <person name="Kamsteeg E.J."/>
            <person name="Tijssen M.A."/>
            <person name="Verschuuren C."/>
            <person name="van Egmond M.E."/>
            <person name="Flowers J.M."/>
            <person name="McEntagart M."/>
            <person name="Tucci A."/>
            <person name="Coubes P."/>
            <person name="Bustos B.I."/>
            <person name="Gonzalez-Latapi P."/>
            <person name="Tisch S."/>
            <person name="Darveniza P."/>
            <person name="Gorman K.M."/>
            <person name="Peall K.J."/>
            <person name="Boetzel K."/>
            <person name="Koch J.C."/>
            <person name="Kmiec T."/>
            <person name="Plecko B."/>
            <person name="Boesch S."/>
            <person name="Haslinger B."/>
            <person name="Jech R."/>
            <person name="Garavaglia B."/>
            <person name="Wood N."/>
            <person name="Houlden H."/>
            <person name="Gissen P."/>
            <person name="Lubbe S.J."/>
            <person name="Sue C.M."/>
            <person name="Cif L."/>
            <person name="Mencacci N.E."/>
            <person name="Anderson G."/>
            <person name="Kurian M.A."/>
            <person name="Winkelmann J."/>
        </authorList>
    </citation>
    <scope>INVOLVEMENT IN SCAR29</scope>
</reference>
<reference key="20">
    <citation type="journal article" date="2020" name="Dev. Cell">
        <title>ORF3a of the COVID-19 virus SARS-CoV-2 blocks HOPS complex-mediated assembly of the SNARE complex required for autolysosome formation.</title>
        <authorList>
            <person name="Miao G."/>
            <person name="Zhao H."/>
            <person name="Li Y."/>
            <person name="Ji M."/>
            <person name="Chen Y."/>
            <person name="Shi Y."/>
            <person name="Bi Y."/>
            <person name="Wang P."/>
            <person name="Zhang H."/>
        </authorList>
    </citation>
    <scope>INTERACTION WITH STX17</scope>
    <scope>SUBCELLULAR LOCATION</scope>
</reference>
<reference key="21">
    <citation type="journal article" date="2023" name="Nat. Commun.">
        <title>C9orf72-catalyzed GTP loading of Rab39A enables HOPS-mediated membrane tethering and fusion in mammalian autophagy.</title>
        <authorList>
            <person name="Zhang S."/>
            <person name="Tong M."/>
            <person name="Zheng D."/>
            <person name="Huang H."/>
            <person name="Li L."/>
            <person name="Ungermann C."/>
            <person name="Pan Y."/>
            <person name="Luo H."/>
            <person name="Lei M."/>
            <person name="Tang Z."/>
            <person name="Fu W."/>
            <person name="Chen S."/>
            <person name="Liu X."/>
            <person name="Zhong Q."/>
        </authorList>
    </citation>
    <scope>FUNCTION</scope>
    <scope>INTERACTION WITH RAB39A AND RAB39B</scope>
</reference>
<reference key="22">
    <citation type="journal article" date="2021" name="Brain">
        <title>Bi-allelic variants in HOPS complex subunit VPS41 cause cerebellar ataxia and abnormal membrane trafficking.</title>
        <authorList>
            <person name="Sanderson L.E."/>
            <person name="Lanko K."/>
            <person name="Alsagob M."/>
            <person name="Almass R."/>
            <person name="Al-Ahmadi N."/>
            <person name="Najafi M."/>
            <person name="Al-Muhaizea M.A."/>
            <person name="Alzaidan H."/>
            <person name="AlDhalaan H."/>
            <person name="Perenthaler E."/>
            <person name="van der Linde H.C."/>
            <person name="Nikoncuk A."/>
            <person name="Kuehn N.A."/>
            <person name="Antony D."/>
            <person name="Owaidah T.M."/>
            <person name="Raskin S."/>
            <person name="Vieira L.G.D.R."/>
            <person name="Mombach R."/>
            <person name="Ahangari N."/>
            <person name="Silveira T.R.D."/>
            <person name="Ameziane N."/>
            <person name="Rolfs A."/>
            <person name="Alharbi A."/>
            <person name="Sabbagh R.M."/>
            <person name="AlAhmadi K."/>
            <person name="Alawam B."/>
            <person name="Ghebeh H."/>
            <person name="AlHargan A."/>
            <person name="Albader A.A."/>
            <person name="Binhumaid F.S."/>
            <person name="Goljan E."/>
            <person name="Monies D."/>
            <person name="Mustafa O.M."/>
            <person name="Aldosary M."/>
            <person name="AlBakheet A."/>
            <person name="Alyounes B."/>
            <person name="Almutairi F."/>
            <person name="Al-Odaib A."/>
            <person name="Aksoy D.B."/>
            <person name="Basak A.N."/>
            <person name="Palvadeau R."/>
            <person name="Trabzuni D."/>
            <person name="Rosenfeld J.A."/>
            <person name="Karimiani E.G."/>
            <person name="Meyer B.F."/>
            <person name="Karakas B."/>
            <person name="Al-Mohanna F."/>
            <person name="Arold S.T."/>
            <person name="Colak D."/>
            <person name="Maroofian R."/>
            <person name="Houlden H."/>
            <person name="Bertoli-Avella A.M."/>
            <person name="Schmidts M."/>
            <person name="Barakat T.S."/>
            <person name="van Ham T.J."/>
            <person name="Kaya N."/>
        </authorList>
    </citation>
    <scope>INVOLVEMENT IN SCAR29</scope>
    <scope>VARIANTS SCAR29 GLY-13; PRO-285; PRO-633 AND PHE-791</scope>
    <scope>CHARACTERIZATION OF VARIANTS SCAR29 GLY-13; PRO-285; PRO-633 AND PHE-791</scope>
    <scope>TISSUE SPECIFICITY</scope>
</reference>
<reference key="23">
    <citation type="journal article" date="2021" name="EMBO Mol. Med.">
        <title>Neurodegenerative VPS41 variants inhibit HOPS function and mTORC1-dependent TFEB/TFE3 regulation.</title>
        <authorList>
            <person name="van der Welle R.E.N."/>
            <person name="Jobling R."/>
            <person name="Burns C."/>
            <person name="Sanza P."/>
            <person name="van der Beek J.A."/>
            <person name="Fasano A."/>
            <person name="Chen L."/>
            <person name="Zwartkruis F.J."/>
            <person name="Zwakenberg S."/>
            <person name="Griffin E.F."/>
            <person name="Ten Brink C."/>
            <person name="Veenendaal T."/>
            <person name="Liv N."/>
            <person name="van Ravenswaaij-Arts C.M.A."/>
            <person name="Lemmink H.H."/>
            <person name="Pfundt R."/>
            <person name="Blaser S."/>
            <person name="Sepulveda C."/>
            <person name="Lozano A.M."/>
            <person name="Yoon G."/>
            <person name="Santiago-Sim T."/>
            <person name="Asensio C.S."/>
            <person name="Caldwell G.A."/>
            <person name="Caldwell K.A."/>
            <person name="Chitayat D."/>
            <person name="Klumperman J."/>
        </authorList>
    </citation>
    <scope>VARIANTS SCAR29 662-ARG--LYS-854 DEL AND PRO-285</scope>
    <scope>CHARACTERIZATION OF VARIANTS SCAR29 662-ARG--LYS-854 DEL AND PRO-285</scope>
    <scope>FUNCTION</scope>
    <scope>SUBUNIT</scope>
    <scope>SUBCELLULAR LOCATION</scope>
</reference>